<keyword id="KW-0002">3D-structure</keyword>
<keyword id="KW-0903">Direct protein sequencing</keyword>
<keyword id="KW-0249">Electron transport</keyword>
<keyword id="KW-0349">Heme</keyword>
<keyword id="KW-0408">Iron</keyword>
<keyword id="KW-0479">Metal-binding</keyword>
<keyword id="KW-0813">Transport</keyword>
<comment type="function">
    <text>Cytochrome c' is the most widely occurring bacterial c-type cytochrome. Cytochromes c' are high-spin proteins and the heme has no sixth ligand. Their exact function is not known.</text>
</comment>
<comment type="PTM">
    <text evidence="1 2">Binds 1 heme c group covalently per subunit.</text>
</comment>
<feature type="chain" id="PRO_0000108373" description="Cytochrome c'">
    <location>
        <begin position="1"/>
        <end position="129"/>
    </location>
</feature>
<feature type="binding site" evidence="1 2 3 4 5">
    <location>
        <position position="12"/>
    </location>
    <ligand>
        <name>heme c</name>
        <dbReference type="ChEBI" id="CHEBI:61717"/>
    </ligand>
</feature>
<feature type="binding site" evidence="1 2 3 4 5">
    <location>
        <position position="13"/>
    </location>
    <ligand>
        <name>heme c</name>
        <dbReference type="ChEBI" id="CHEBI:61717"/>
    </ligand>
</feature>
<feature type="binding site" evidence="1 2 3 4 5">
    <location>
        <position position="69"/>
    </location>
    <ligand>
        <name>heme c</name>
        <dbReference type="ChEBI" id="CHEBI:61717"/>
    </ligand>
</feature>
<feature type="binding site" evidence="1 2 3 4 5">
    <location>
        <position position="70"/>
    </location>
    <ligand>
        <name>heme c</name>
        <dbReference type="ChEBI" id="CHEBI:61717"/>
    </ligand>
</feature>
<feature type="binding site" description="covalent" evidence="1 2 3 4 5">
    <location>
        <position position="119"/>
    </location>
    <ligand>
        <name>heme c</name>
        <dbReference type="ChEBI" id="CHEBI:61717"/>
    </ligand>
</feature>
<feature type="binding site" description="covalent" evidence="1 2 3 4 5">
    <location>
        <position position="122"/>
    </location>
    <ligand>
        <name>heme c</name>
        <dbReference type="ChEBI" id="CHEBI:61717"/>
    </ligand>
</feature>
<feature type="binding site" description="axial binding residue" evidence="1 2 3 4 5">
    <location>
        <position position="123"/>
    </location>
    <ligand>
        <name>heme c</name>
        <dbReference type="ChEBI" id="CHEBI:61717"/>
    </ligand>
    <ligandPart>
        <name>Fe</name>
        <dbReference type="ChEBI" id="CHEBI:18248"/>
    </ligandPart>
</feature>
<feature type="helix" evidence="6">
    <location>
        <begin position="5"/>
        <end position="30"/>
    </location>
</feature>
<feature type="helix" evidence="6">
    <location>
        <begin position="38"/>
        <end position="52"/>
    </location>
</feature>
<feature type="helix" evidence="6">
    <location>
        <begin position="55"/>
        <end position="57"/>
    </location>
</feature>
<feature type="turn" evidence="7">
    <location>
        <begin position="61"/>
        <end position="64"/>
    </location>
</feature>
<feature type="strand" evidence="7">
    <location>
        <begin position="65"/>
        <end position="67"/>
    </location>
</feature>
<feature type="helix" evidence="6">
    <location>
        <begin position="74"/>
        <end position="77"/>
    </location>
</feature>
<feature type="helix" evidence="6">
    <location>
        <begin position="79"/>
        <end position="102"/>
    </location>
</feature>
<feature type="helix" evidence="6">
    <location>
        <begin position="105"/>
        <end position="126"/>
    </location>
</feature>
<dbReference type="PIR" id="A00135">
    <property type="entry name" value="CCRFCG"/>
</dbReference>
<dbReference type="PDB" id="1JAF">
    <property type="method" value="X-ray"/>
    <property type="resolution" value="2.50 A"/>
    <property type="chains" value="A/B=1-129"/>
</dbReference>
<dbReference type="PDB" id="2J8W">
    <property type="method" value="X-ray"/>
    <property type="resolution" value="1.29 A"/>
    <property type="chains" value="A/B=1-129"/>
</dbReference>
<dbReference type="PDB" id="2J9B">
    <property type="method" value="X-ray"/>
    <property type="resolution" value="1.50 A"/>
    <property type="chains" value="A/B=1-129"/>
</dbReference>
<dbReference type="PDBsum" id="1JAF"/>
<dbReference type="PDBsum" id="2J8W"/>
<dbReference type="PDBsum" id="2J9B"/>
<dbReference type="SMR" id="P00142"/>
<dbReference type="EvolutionaryTrace" id="P00142"/>
<dbReference type="GO" id="GO:0042597">
    <property type="term" value="C:periplasmic space"/>
    <property type="evidence" value="ECO:0007669"/>
    <property type="project" value="InterPro"/>
</dbReference>
<dbReference type="GO" id="GO:0009055">
    <property type="term" value="F:electron transfer activity"/>
    <property type="evidence" value="ECO:0007669"/>
    <property type="project" value="InterPro"/>
</dbReference>
<dbReference type="GO" id="GO:0020037">
    <property type="term" value="F:heme binding"/>
    <property type="evidence" value="ECO:0007669"/>
    <property type="project" value="InterPro"/>
</dbReference>
<dbReference type="GO" id="GO:0005506">
    <property type="term" value="F:iron ion binding"/>
    <property type="evidence" value="ECO:0007669"/>
    <property type="project" value="InterPro"/>
</dbReference>
<dbReference type="GO" id="GO:0022900">
    <property type="term" value="P:electron transport chain"/>
    <property type="evidence" value="ECO:0007669"/>
    <property type="project" value="InterPro"/>
</dbReference>
<dbReference type="Gene3D" id="1.20.120.10">
    <property type="entry name" value="Cytochrome c/b562"/>
    <property type="match status" value="1"/>
</dbReference>
<dbReference type="InterPro" id="IPR010980">
    <property type="entry name" value="Cyt_c/b562"/>
</dbReference>
<dbReference type="InterPro" id="IPR002321">
    <property type="entry name" value="Cyt_c_II"/>
</dbReference>
<dbReference type="InterPro" id="IPR012127">
    <property type="entry name" value="Cyt_c_prime"/>
</dbReference>
<dbReference type="InterPro" id="IPR015984">
    <property type="entry name" value="Cyt_c_prime_subgr"/>
</dbReference>
<dbReference type="Pfam" id="PF01322">
    <property type="entry name" value="Cytochrom_C_2"/>
    <property type="match status" value="1"/>
</dbReference>
<dbReference type="PIRSF" id="PIRSF000027">
    <property type="entry name" value="Cytc_c_prime"/>
    <property type="match status" value="1"/>
</dbReference>
<dbReference type="PRINTS" id="PR00608">
    <property type="entry name" value="CYTCHROMECII"/>
</dbReference>
<dbReference type="SUPFAM" id="SSF47175">
    <property type="entry name" value="Cytochromes"/>
    <property type="match status" value="1"/>
</dbReference>
<dbReference type="PROSITE" id="PS51009">
    <property type="entry name" value="CYTCII"/>
    <property type="match status" value="1"/>
</dbReference>
<accession>P00142</accession>
<sequence length="129" mass="13283">QFQKPGDAIEYRQSAFTLIANHFGRVAAMAQGKAPFDAKVAAENIALVSTLSKLPLTAFGPGTDKGHGTEAKPAVWSDAAGFKAAADKFAAAVDKLDAAGKTGDFAQIKAAVGETGGACKGCHDKFKEK</sequence>
<name>CYCP_RUBGE</name>
<reference key="1">
    <citation type="journal article" date="1979" name="Nature">
        <title>Anomalies in amino acid sequences of small cytochromes c and cytochromes c' from two species of purple photosynthetic bacteria.</title>
        <authorList>
            <person name="Ambler R.P."/>
            <person name="Meyer T.E."/>
            <person name="Kamen M.D."/>
        </authorList>
    </citation>
    <scope>PROTEIN SEQUENCE</scope>
</reference>
<reference key="2">
    <citation type="journal article" date="1993" name="Biochemistry">
        <title>One- and two-dimensional NMR characterization of oxidized and reduced cytochrome c' from Rhodocyclus gelatinosus.</title>
        <authorList>
            <person name="Bertini I."/>
            <person name="Gori G."/>
            <person name="Luchinat C."/>
            <person name="Vila A.J."/>
        </authorList>
    </citation>
    <scope>STRUCTURE BY NMR</scope>
</reference>
<reference evidence="3" key="3">
    <citation type="journal article" date="1997" name="J. Biol. Inorg. Chem.">
        <title>Crystal structure of cytochrome c' from Rhodocyclus gelatinosus and comparison with other cytochromes c'.</title>
        <authorList>
            <person name="Archer M."/>
            <person name="Banci L."/>
            <person name="Dikaya E."/>
            <person name="Romao M.J."/>
        </authorList>
    </citation>
    <scope>X-RAY CRYSTALLOGRAPHY (2.5 ANGSTROMS) IN COMPLEX WITH HEME C</scope>
</reference>
<reference evidence="4 5" key="4">
    <citation type="journal article" date="2008" name="J. Inorg. Biochem.">
        <title>High resolution crystal structure of Rubrivivax gelatinosus cytochrome c'.</title>
        <authorList>
            <person name="Benini S."/>
            <person name="Rypniewski W.R."/>
            <person name="Wilson K.S."/>
            <person name="Ciurli S."/>
        </authorList>
    </citation>
    <scope>X-RAY CRYSTALLOGRAPHY (1.29 ANGSTROMS) IN COMPLEX WITH HEME C</scope>
</reference>
<organism>
    <name type="scientific">Rubrivivax gelatinosus</name>
    <name type="common">Rhodocyclus gelatinosus</name>
    <name type="synonym">Rhodopseudomonas gelatinosa</name>
    <dbReference type="NCBI Taxonomy" id="28068"/>
    <lineage>
        <taxon>Bacteria</taxon>
        <taxon>Pseudomonadati</taxon>
        <taxon>Pseudomonadota</taxon>
        <taxon>Betaproteobacteria</taxon>
        <taxon>Burkholderiales</taxon>
        <taxon>Sphaerotilaceae</taxon>
        <taxon>Rubrivivax</taxon>
    </lineage>
</organism>
<evidence type="ECO:0000269" key="1">
    <source>
    </source>
</evidence>
<evidence type="ECO:0000269" key="2">
    <source ref="3"/>
</evidence>
<evidence type="ECO:0007744" key="3">
    <source>
        <dbReference type="PDB" id="1JAF"/>
    </source>
</evidence>
<evidence type="ECO:0007744" key="4">
    <source>
        <dbReference type="PDB" id="2J8W"/>
    </source>
</evidence>
<evidence type="ECO:0007744" key="5">
    <source>
        <dbReference type="PDB" id="2J9B"/>
    </source>
</evidence>
<evidence type="ECO:0007829" key="6">
    <source>
        <dbReference type="PDB" id="2J8W"/>
    </source>
</evidence>
<evidence type="ECO:0007829" key="7">
    <source>
        <dbReference type="PDB" id="2J9B"/>
    </source>
</evidence>
<proteinExistence type="evidence at protein level"/>
<protein>
    <recommendedName>
        <fullName>Cytochrome c'</fullName>
    </recommendedName>
</protein>